<proteinExistence type="evidence at protein level"/>
<keyword id="KW-0002">3D-structure</keyword>
<keyword id="KW-0158">Chromosome</keyword>
<keyword id="KW-0963">Cytoplasm</keyword>
<keyword id="KW-0240">DNA-directed RNA polymerase</keyword>
<keyword id="KW-0479">Metal-binding</keyword>
<keyword id="KW-0548">Nucleotidyltransferase</keyword>
<keyword id="KW-1185">Reference proteome</keyword>
<keyword id="KW-0804">Transcription</keyword>
<keyword id="KW-0808">Transferase</keyword>
<keyword id="KW-0862">Zinc</keyword>
<reference key="1">
    <citation type="journal article" date="2005" name="Genome Res.">
        <title>Complete genome sequence of the hyperthermophilic archaeon Thermococcus kodakaraensis KOD1 and comparison with Pyrococcus genomes.</title>
        <authorList>
            <person name="Fukui T."/>
            <person name="Atomi H."/>
            <person name="Kanai T."/>
            <person name="Matsumi R."/>
            <person name="Fujiwara S."/>
            <person name="Imanaka T."/>
        </authorList>
    </citation>
    <scope>NUCLEOTIDE SEQUENCE [LARGE SCALE GENOMIC DNA]</scope>
    <source>
        <strain>ATCC BAA-918 / JCM 12380 / KOD1</strain>
    </source>
</reference>
<reference key="2">
    <citation type="journal article" date="2011" name="Mol. Biol. Cell">
        <title>Histone and TK0471/TrmBL2 form a novel heterogeneous genome architecture in the hyperthermophilic archaeon Thermococcus kodakarensis.</title>
        <authorList>
            <person name="Maruyama H."/>
            <person name="Shin M."/>
            <person name="Oda T."/>
            <person name="Matsumi R."/>
            <person name="Ohniwa R.L."/>
            <person name="Itoh T."/>
            <person name="Shirahige K."/>
            <person name="Imanaka T."/>
            <person name="Atomi H."/>
            <person name="Yoshimura S.H."/>
            <person name="Takeyasu K."/>
        </authorList>
    </citation>
    <scope>IDENTIFICATION BY MASS SPECTROMETRY</scope>
    <scope>SUBCELLULAR LOCATION</scope>
    <source>
        <strain>ATCC BAA-918 / JCM 12380 / KOD1</strain>
    </source>
</reference>
<sequence>MIVPVRCFTCGKVLADKYYEFKKRVEAGEDPGKVLDDLGVERYCCRRTLLSHVELIDQVMVYKVY</sequence>
<organism>
    <name type="scientific">Thermococcus kodakarensis (strain ATCC BAA-918 / JCM 12380 / KOD1)</name>
    <name type="common">Pyrococcus kodakaraensis (strain KOD1)</name>
    <dbReference type="NCBI Taxonomy" id="69014"/>
    <lineage>
        <taxon>Archaea</taxon>
        <taxon>Methanobacteriati</taxon>
        <taxon>Methanobacteriota</taxon>
        <taxon>Thermococci</taxon>
        <taxon>Thermococcales</taxon>
        <taxon>Thermococcaceae</taxon>
        <taxon>Thermococcus</taxon>
    </lineage>
</organism>
<comment type="function">
    <text evidence="1">DNA-dependent RNA polymerase (RNAP) catalyzes the transcription of DNA into RNA using the four ribonucleoside triphosphates as substrates.</text>
</comment>
<comment type="catalytic activity">
    <reaction evidence="1">
        <text>RNA(n) + a ribonucleoside 5'-triphosphate = RNA(n+1) + diphosphate</text>
        <dbReference type="Rhea" id="RHEA:21248"/>
        <dbReference type="Rhea" id="RHEA-COMP:14527"/>
        <dbReference type="Rhea" id="RHEA-COMP:17342"/>
        <dbReference type="ChEBI" id="CHEBI:33019"/>
        <dbReference type="ChEBI" id="CHEBI:61557"/>
        <dbReference type="ChEBI" id="CHEBI:140395"/>
        <dbReference type="EC" id="2.7.7.6"/>
    </reaction>
</comment>
<comment type="cofactor">
    <cofactor evidence="1">
        <name>Zn(2+)</name>
        <dbReference type="ChEBI" id="CHEBI:29105"/>
    </cofactor>
    <text evidence="1">Binds 1 zinc ion.</text>
</comment>
<comment type="subunit">
    <text evidence="1">Part of the RNA polymerase complex.</text>
</comment>
<comment type="subcellular location">
    <subcellularLocation>
        <location evidence="1 3">Cytoplasm</location>
    </subcellularLocation>
    <subcellularLocation>
        <location evidence="2">Chromosome</location>
    </subcellularLocation>
</comment>
<comment type="similarity">
    <text evidence="1">Belongs to the archaeal Rpo10/eukaryotic RPB10 RNA polymerase subunit family.</text>
</comment>
<gene>
    <name evidence="1" type="primary">rpo10</name>
    <name evidence="1" type="synonym">rpoN</name>
    <name type="ordered locus">TK1499</name>
</gene>
<evidence type="ECO:0000255" key="1">
    <source>
        <dbReference type="HAMAP-Rule" id="MF_00250"/>
    </source>
</evidence>
<evidence type="ECO:0000269" key="2">
    <source>
    </source>
</evidence>
<evidence type="ECO:0000305" key="3">
    <source>
    </source>
</evidence>
<evidence type="ECO:0007829" key="4">
    <source>
        <dbReference type="PDB" id="4QIW"/>
    </source>
</evidence>
<evidence type="ECO:0007829" key="5">
    <source>
        <dbReference type="PDB" id="9BCU"/>
    </source>
</evidence>
<accession>Q5JJC9</accession>
<protein>
    <recommendedName>
        <fullName evidence="1">DNA-directed RNA polymerase subunit Rpo10</fullName>
        <ecNumber evidence="1">2.7.7.6</ecNumber>
    </recommendedName>
    <alternativeName>
        <fullName evidence="1">DNA-directed RNA polymerase subunit N</fullName>
    </alternativeName>
</protein>
<dbReference type="EC" id="2.7.7.6" evidence="1"/>
<dbReference type="EMBL" id="AP006878">
    <property type="protein sequence ID" value="BAD85688.1"/>
    <property type="molecule type" value="Genomic_DNA"/>
</dbReference>
<dbReference type="RefSeq" id="WP_011250450.1">
    <property type="nucleotide sequence ID" value="NC_006624.1"/>
</dbReference>
<dbReference type="PDB" id="4QIW">
    <property type="method" value="X-ray"/>
    <property type="resolution" value="3.50 A"/>
    <property type="chains" value="N/V=1-65"/>
</dbReference>
<dbReference type="PDB" id="6KF3">
    <property type="method" value="EM"/>
    <property type="resolution" value="3.90 A"/>
    <property type="chains" value="N=1-65"/>
</dbReference>
<dbReference type="PDB" id="6KF4">
    <property type="method" value="EM"/>
    <property type="resolution" value="3.97 A"/>
    <property type="chains" value="N=1-65"/>
</dbReference>
<dbReference type="PDB" id="6KF9">
    <property type="method" value="EM"/>
    <property type="resolution" value="3.79 A"/>
    <property type="chains" value="N=1-65"/>
</dbReference>
<dbReference type="PDB" id="9BCT">
    <property type="method" value="EM"/>
    <property type="resolution" value="2.50 A"/>
    <property type="chains" value="N=1-65"/>
</dbReference>
<dbReference type="PDB" id="9BCU">
    <property type="method" value="EM"/>
    <property type="resolution" value="2.20 A"/>
    <property type="chains" value="N=1-65"/>
</dbReference>
<dbReference type="PDBsum" id="4QIW"/>
<dbReference type="PDBsum" id="6KF3"/>
<dbReference type="PDBsum" id="6KF4"/>
<dbReference type="PDBsum" id="6KF9"/>
<dbReference type="PDBsum" id="9BCT"/>
<dbReference type="PDBsum" id="9BCU"/>
<dbReference type="EMDB" id="EMD-44438"/>
<dbReference type="EMDB" id="EMD-44439"/>
<dbReference type="SMR" id="Q5JJC9"/>
<dbReference type="FunCoup" id="Q5JJC9">
    <property type="interactions" value="66"/>
</dbReference>
<dbReference type="STRING" id="69014.TK1499"/>
<dbReference type="EnsemblBacteria" id="BAD85688">
    <property type="protein sequence ID" value="BAD85688"/>
    <property type="gene ID" value="TK1499"/>
</dbReference>
<dbReference type="GeneID" id="34861704"/>
<dbReference type="KEGG" id="tko:TK1499"/>
<dbReference type="PATRIC" id="fig|69014.16.peg.1459"/>
<dbReference type="eggNOG" id="arCOG04244">
    <property type="taxonomic scope" value="Archaea"/>
</dbReference>
<dbReference type="HOGENOM" id="CLU_143122_1_1_2"/>
<dbReference type="InParanoid" id="Q5JJC9"/>
<dbReference type="OrthoDB" id="371754at2157"/>
<dbReference type="PhylomeDB" id="Q5JJC9"/>
<dbReference type="Proteomes" id="UP000000536">
    <property type="component" value="Chromosome"/>
</dbReference>
<dbReference type="GO" id="GO:0005694">
    <property type="term" value="C:chromosome"/>
    <property type="evidence" value="ECO:0007669"/>
    <property type="project" value="UniProtKB-SubCell"/>
</dbReference>
<dbReference type="GO" id="GO:0005737">
    <property type="term" value="C:cytoplasm"/>
    <property type="evidence" value="ECO:0007669"/>
    <property type="project" value="UniProtKB-SubCell"/>
</dbReference>
<dbReference type="GO" id="GO:0000428">
    <property type="term" value="C:DNA-directed RNA polymerase complex"/>
    <property type="evidence" value="ECO:0007669"/>
    <property type="project" value="UniProtKB-KW"/>
</dbReference>
<dbReference type="GO" id="GO:0003677">
    <property type="term" value="F:DNA binding"/>
    <property type="evidence" value="ECO:0007669"/>
    <property type="project" value="InterPro"/>
</dbReference>
<dbReference type="GO" id="GO:0003899">
    <property type="term" value="F:DNA-directed RNA polymerase activity"/>
    <property type="evidence" value="ECO:0007669"/>
    <property type="project" value="UniProtKB-UniRule"/>
</dbReference>
<dbReference type="GO" id="GO:0008270">
    <property type="term" value="F:zinc ion binding"/>
    <property type="evidence" value="ECO:0000318"/>
    <property type="project" value="GO_Central"/>
</dbReference>
<dbReference type="GO" id="GO:0006351">
    <property type="term" value="P:DNA-templated transcription"/>
    <property type="evidence" value="ECO:0007669"/>
    <property type="project" value="UniProtKB-UniRule"/>
</dbReference>
<dbReference type="FunFam" id="1.10.10.60:FF:000335">
    <property type="entry name" value="DNA-directed RNA polymerase subunit N, putative"/>
    <property type="match status" value="1"/>
</dbReference>
<dbReference type="Gene3D" id="1.10.10.60">
    <property type="entry name" value="Homeodomain-like"/>
    <property type="match status" value="1"/>
</dbReference>
<dbReference type="HAMAP" id="MF_00250">
    <property type="entry name" value="RNApol_arch_Rpo10"/>
    <property type="match status" value="1"/>
</dbReference>
<dbReference type="InterPro" id="IPR023580">
    <property type="entry name" value="RNA_pol_su_RPB10"/>
</dbReference>
<dbReference type="InterPro" id="IPR020789">
    <property type="entry name" value="RNA_pol_suN_Zn-BS"/>
</dbReference>
<dbReference type="InterPro" id="IPR000268">
    <property type="entry name" value="RPABC5/Rpb10"/>
</dbReference>
<dbReference type="NCBIfam" id="NF003089">
    <property type="entry name" value="PRK04016.1"/>
    <property type="match status" value="1"/>
</dbReference>
<dbReference type="PANTHER" id="PTHR23431:SF3">
    <property type="entry name" value="DNA-DIRECTED RNA POLYMERASES I, II, AND III SUBUNIT RPABC5"/>
    <property type="match status" value="1"/>
</dbReference>
<dbReference type="PANTHER" id="PTHR23431">
    <property type="entry name" value="DNA-DIRECTED RNA POLYMERASES I, II, AND III SUBUNIT RPABC5 FAMILY MEMBER"/>
    <property type="match status" value="1"/>
</dbReference>
<dbReference type="Pfam" id="PF01194">
    <property type="entry name" value="RNA_pol_N"/>
    <property type="match status" value="1"/>
</dbReference>
<dbReference type="PIRSF" id="PIRSF005653">
    <property type="entry name" value="RNA_pol_N/8_sub"/>
    <property type="match status" value="1"/>
</dbReference>
<dbReference type="SUPFAM" id="SSF46924">
    <property type="entry name" value="RNA polymerase subunit RPB10"/>
    <property type="match status" value="1"/>
</dbReference>
<dbReference type="PROSITE" id="PS01112">
    <property type="entry name" value="RNA_POL_N_8KD"/>
    <property type="match status" value="1"/>
</dbReference>
<name>RPO10_THEKO</name>
<feature type="chain" id="PRO_0000121360" description="DNA-directed RNA polymerase subunit Rpo10">
    <location>
        <begin position="1"/>
        <end position="65"/>
    </location>
</feature>
<feature type="binding site" evidence="1">
    <location>
        <position position="7"/>
    </location>
    <ligand>
        <name>Zn(2+)</name>
        <dbReference type="ChEBI" id="CHEBI:29105"/>
    </ligand>
</feature>
<feature type="binding site" evidence="1">
    <location>
        <position position="10"/>
    </location>
    <ligand>
        <name>Zn(2+)</name>
        <dbReference type="ChEBI" id="CHEBI:29105"/>
    </ligand>
</feature>
<feature type="binding site" evidence="1">
    <location>
        <position position="44"/>
    </location>
    <ligand>
        <name>Zn(2+)</name>
        <dbReference type="ChEBI" id="CHEBI:29105"/>
    </ligand>
</feature>
<feature type="binding site" evidence="1">
    <location>
        <position position="45"/>
    </location>
    <ligand>
        <name>Zn(2+)</name>
        <dbReference type="ChEBI" id="CHEBI:29105"/>
    </ligand>
</feature>
<feature type="turn" evidence="5">
    <location>
        <begin position="8"/>
        <end position="10"/>
    </location>
</feature>
<feature type="helix" evidence="4">
    <location>
        <begin position="15"/>
        <end position="17"/>
    </location>
</feature>
<feature type="helix" evidence="5">
    <location>
        <begin position="18"/>
        <end position="26"/>
    </location>
</feature>
<feature type="helix" evidence="5">
    <location>
        <begin position="31"/>
        <end position="37"/>
    </location>
</feature>
<feature type="helix" evidence="5">
    <location>
        <begin position="43"/>
        <end position="50"/>
    </location>
</feature>
<feature type="helix" evidence="5">
    <location>
        <begin position="57"/>
        <end position="60"/>
    </location>
</feature>